<gene>
    <name evidence="1" type="primary">queA</name>
    <name type="ordered locus">SPO2226</name>
</gene>
<comment type="function">
    <text evidence="1">Transfers and isomerizes the ribose moiety from AdoMet to the 7-aminomethyl group of 7-deazaguanine (preQ1-tRNA) to give epoxyqueuosine (oQ-tRNA).</text>
</comment>
<comment type="catalytic activity">
    <reaction evidence="1">
        <text>7-aminomethyl-7-carbaguanosine(34) in tRNA + S-adenosyl-L-methionine = epoxyqueuosine(34) in tRNA + adenine + L-methionine + 2 H(+)</text>
        <dbReference type="Rhea" id="RHEA:32155"/>
        <dbReference type="Rhea" id="RHEA-COMP:10342"/>
        <dbReference type="Rhea" id="RHEA-COMP:18582"/>
        <dbReference type="ChEBI" id="CHEBI:15378"/>
        <dbReference type="ChEBI" id="CHEBI:16708"/>
        <dbReference type="ChEBI" id="CHEBI:57844"/>
        <dbReference type="ChEBI" id="CHEBI:59789"/>
        <dbReference type="ChEBI" id="CHEBI:82833"/>
        <dbReference type="ChEBI" id="CHEBI:194443"/>
        <dbReference type="EC" id="2.4.99.17"/>
    </reaction>
</comment>
<comment type="pathway">
    <text evidence="1">tRNA modification; tRNA-queuosine biosynthesis.</text>
</comment>
<comment type="subunit">
    <text evidence="1">Monomer.</text>
</comment>
<comment type="subcellular location">
    <subcellularLocation>
        <location evidence="1">Cytoplasm</location>
    </subcellularLocation>
</comment>
<comment type="similarity">
    <text evidence="1">Belongs to the QueA family.</text>
</comment>
<accession>Q5LRA3</accession>
<proteinExistence type="inferred from homology"/>
<sequence>MKLSDFDFDLPDDLIATRPAQPRSSARLLVARGDAISDAVVRDLPDWLRPGDRLVLNDTRVIPARLSGTRQRQSAQGPVTARIEITLLEPRADGSWSALAKPLRKLREGETIIFSNDLSADVEAIEDGQALLRFNLTGPDFDAALAQAGAMPLPPYIAAKRAADEQDKTDYQTVWARHSGAVAAPTASLHFDDTLLAALAAHGVTFTHVTLHVGAGTFLPVKVEDVTTHKMHAEWGRVSAEAAAEIAATKAAGGRVIPVGTTALRLIESAARGGQIAPWEGDTDIFIYPGFDFRVADGLMTNFHLPKSTLLMLVSALMGQESIRKIYAHAVENRYRFFSYGDASLLLPG</sequence>
<feature type="chain" id="PRO_0000231374" description="S-adenosylmethionine:tRNA ribosyltransferase-isomerase">
    <location>
        <begin position="1"/>
        <end position="349"/>
    </location>
</feature>
<dbReference type="EC" id="2.4.99.17" evidence="1"/>
<dbReference type="EMBL" id="CP000031">
    <property type="protein sequence ID" value="AAV95492.1"/>
    <property type="molecule type" value="Genomic_DNA"/>
</dbReference>
<dbReference type="RefSeq" id="WP_011047948.1">
    <property type="nucleotide sequence ID" value="NC_003911.12"/>
</dbReference>
<dbReference type="SMR" id="Q5LRA3"/>
<dbReference type="STRING" id="246200.SPO2226"/>
<dbReference type="PaxDb" id="246200-SPO2226"/>
<dbReference type="KEGG" id="sil:SPO2226"/>
<dbReference type="eggNOG" id="COG0809">
    <property type="taxonomic scope" value="Bacteria"/>
</dbReference>
<dbReference type="HOGENOM" id="CLU_039110_1_1_5"/>
<dbReference type="OrthoDB" id="9805933at2"/>
<dbReference type="UniPathway" id="UPA00392"/>
<dbReference type="Proteomes" id="UP000001023">
    <property type="component" value="Chromosome"/>
</dbReference>
<dbReference type="GO" id="GO:0005737">
    <property type="term" value="C:cytoplasm"/>
    <property type="evidence" value="ECO:0007669"/>
    <property type="project" value="UniProtKB-SubCell"/>
</dbReference>
<dbReference type="GO" id="GO:0051075">
    <property type="term" value="F:S-adenosylmethionine:tRNA ribosyltransferase-isomerase activity"/>
    <property type="evidence" value="ECO:0007669"/>
    <property type="project" value="UniProtKB-EC"/>
</dbReference>
<dbReference type="GO" id="GO:0008616">
    <property type="term" value="P:queuosine biosynthetic process"/>
    <property type="evidence" value="ECO:0007669"/>
    <property type="project" value="UniProtKB-UniRule"/>
</dbReference>
<dbReference type="GO" id="GO:0002099">
    <property type="term" value="P:tRNA wobble guanine modification"/>
    <property type="evidence" value="ECO:0007669"/>
    <property type="project" value="TreeGrafter"/>
</dbReference>
<dbReference type="FunFam" id="3.40.1780.10:FF:000001">
    <property type="entry name" value="S-adenosylmethionine:tRNA ribosyltransferase-isomerase"/>
    <property type="match status" value="1"/>
</dbReference>
<dbReference type="Gene3D" id="2.40.10.240">
    <property type="entry name" value="QueA-like"/>
    <property type="match status" value="1"/>
</dbReference>
<dbReference type="Gene3D" id="3.40.1780.10">
    <property type="entry name" value="QueA-like"/>
    <property type="match status" value="1"/>
</dbReference>
<dbReference type="HAMAP" id="MF_00113">
    <property type="entry name" value="QueA"/>
    <property type="match status" value="1"/>
</dbReference>
<dbReference type="InterPro" id="IPR003699">
    <property type="entry name" value="QueA"/>
</dbReference>
<dbReference type="InterPro" id="IPR042118">
    <property type="entry name" value="QueA_dom1"/>
</dbReference>
<dbReference type="InterPro" id="IPR042119">
    <property type="entry name" value="QueA_dom2"/>
</dbReference>
<dbReference type="InterPro" id="IPR036100">
    <property type="entry name" value="QueA_sf"/>
</dbReference>
<dbReference type="NCBIfam" id="NF001140">
    <property type="entry name" value="PRK00147.1"/>
    <property type="match status" value="1"/>
</dbReference>
<dbReference type="NCBIfam" id="TIGR00113">
    <property type="entry name" value="queA"/>
    <property type="match status" value="1"/>
</dbReference>
<dbReference type="PANTHER" id="PTHR30307">
    <property type="entry name" value="S-ADENOSYLMETHIONINE:TRNA RIBOSYLTRANSFERASE-ISOMERASE"/>
    <property type="match status" value="1"/>
</dbReference>
<dbReference type="PANTHER" id="PTHR30307:SF0">
    <property type="entry name" value="S-ADENOSYLMETHIONINE:TRNA RIBOSYLTRANSFERASE-ISOMERASE"/>
    <property type="match status" value="1"/>
</dbReference>
<dbReference type="Pfam" id="PF02547">
    <property type="entry name" value="Queuosine_synth"/>
    <property type="match status" value="1"/>
</dbReference>
<dbReference type="SUPFAM" id="SSF111337">
    <property type="entry name" value="QueA-like"/>
    <property type="match status" value="1"/>
</dbReference>
<organism>
    <name type="scientific">Ruegeria pomeroyi (strain ATCC 700808 / DSM 15171 / DSS-3)</name>
    <name type="common">Silicibacter pomeroyi</name>
    <dbReference type="NCBI Taxonomy" id="246200"/>
    <lineage>
        <taxon>Bacteria</taxon>
        <taxon>Pseudomonadati</taxon>
        <taxon>Pseudomonadota</taxon>
        <taxon>Alphaproteobacteria</taxon>
        <taxon>Rhodobacterales</taxon>
        <taxon>Roseobacteraceae</taxon>
        <taxon>Ruegeria</taxon>
    </lineage>
</organism>
<keyword id="KW-0963">Cytoplasm</keyword>
<keyword id="KW-0671">Queuosine biosynthesis</keyword>
<keyword id="KW-1185">Reference proteome</keyword>
<keyword id="KW-0949">S-adenosyl-L-methionine</keyword>
<keyword id="KW-0808">Transferase</keyword>
<reference key="1">
    <citation type="journal article" date="2004" name="Nature">
        <title>Genome sequence of Silicibacter pomeroyi reveals adaptations to the marine environment.</title>
        <authorList>
            <person name="Moran M.A."/>
            <person name="Buchan A."/>
            <person name="Gonzalez J.M."/>
            <person name="Heidelberg J.F."/>
            <person name="Whitman W.B."/>
            <person name="Kiene R.P."/>
            <person name="Henriksen J.R."/>
            <person name="King G.M."/>
            <person name="Belas R."/>
            <person name="Fuqua C."/>
            <person name="Brinkac L.M."/>
            <person name="Lewis M."/>
            <person name="Johri S."/>
            <person name="Weaver B."/>
            <person name="Pai G."/>
            <person name="Eisen J.A."/>
            <person name="Rahe E."/>
            <person name="Sheldon W.M."/>
            <person name="Ye W."/>
            <person name="Miller T.R."/>
            <person name="Carlton J."/>
            <person name="Rasko D.A."/>
            <person name="Paulsen I.T."/>
            <person name="Ren Q."/>
            <person name="Daugherty S.C."/>
            <person name="DeBoy R.T."/>
            <person name="Dodson R.J."/>
            <person name="Durkin A.S."/>
            <person name="Madupu R."/>
            <person name="Nelson W.C."/>
            <person name="Sullivan S.A."/>
            <person name="Rosovitz M.J."/>
            <person name="Haft D.H."/>
            <person name="Selengut J."/>
            <person name="Ward N."/>
        </authorList>
    </citation>
    <scope>NUCLEOTIDE SEQUENCE [LARGE SCALE GENOMIC DNA]</scope>
    <source>
        <strain>ATCC 700808 / DSM 15171 / DSS-3</strain>
    </source>
</reference>
<reference key="2">
    <citation type="journal article" date="2014" name="Stand. Genomic Sci.">
        <title>An updated genome annotation for the model marine bacterium Ruegeria pomeroyi DSS-3.</title>
        <authorList>
            <person name="Rivers A.R."/>
            <person name="Smith C.B."/>
            <person name="Moran M.A."/>
        </authorList>
    </citation>
    <scope>GENOME REANNOTATION</scope>
    <source>
        <strain>ATCC 700808 / DSM 15171 / DSS-3</strain>
    </source>
</reference>
<protein>
    <recommendedName>
        <fullName evidence="1">S-adenosylmethionine:tRNA ribosyltransferase-isomerase</fullName>
        <ecNumber evidence="1">2.4.99.17</ecNumber>
    </recommendedName>
    <alternativeName>
        <fullName evidence="1">Queuosine biosynthesis protein QueA</fullName>
    </alternativeName>
</protein>
<name>QUEA_RUEPO</name>
<evidence type="ECO:0000255" key="1">
    <source>
        <dbReference type="HAMAP-Rule" id="MF_00113"/>
    </source>
</evidence>